<gene>
    <name evidence="7" type="primary">SPS1</name>
    <name evidence="9" type="ordered locus">Os06g0678200</name>
    <name evidence="8" type="ordered locus">LOC_Os06g46450</name>
</gene>
<evidence type="ECO:0000250" key="1"/>
<evidence type="ECO:0000250" key="2">
    <source>
        <dbReference type="UniProtKB" id="P14324"/>
    </source>
</evidence>
<evidence type="ECO:0000250" key="3">
    <source>
        <dbReference type="UniProtKB" id="Q12051"/>
    </source>
</evidence>
<evidence type="ECO:0000250" key="4">
    <source>
        <dbReference type="UniProtKB" id="Q5HZ00"/>
    </source>
</evidence>
<evidence type="ECO:0000255" key="5"/>
<evidence type="ECO:0000269" key="6">
    <source>
    </source>
</evidence>
<evidence type="ECO:0000303" key="7">
    <source>
    </source>
</evidence>
<evidence type="ECO:0000305" key="8"/>
<evidence type="ECO:0000312" key="9">
    <source>
        <dbReference type="EMBL" id="BAS99121.1"/>
    </source>
</evidence>
<reference key="1">
    <citation type="journal article" date="2005" name="Nature">
        <title>The map-based sequence of the rice genome.</title>
        <authorList>
            <consortium name="International rice genome sequencing project (IRGSP)"/>
        </authorList>
    </citation>
    <scope>NUCLEOTIDE SEQUENCE [LARGE SCALE GENOMIC DNA]</scope>
    <source>
        <strain>cv. Nipponbare</strain>
    </source>
</reference>
<reference key="2">
    <citation type="journal article" date="2008" name="Nucleic Acids Res.">
        <title>The rice annotation project database (RAP-DB): 2008 update.</title>
        <authorList>
            <consortium name="The rice annotation project (RAP)"/>
        </authorList>
    </citation>
    <scope>GENOME REANNOTATION</scope>
    <source>
        <strain>cv. Nipponbare</strain>
    </source>
</reference>
<reference key="3">
    <citation type="journal article" date="2013" name="Rice">
        <title>Improvement of the Oryza sativa Nipponbare reference genome using next generation sequence and optical map data.</title>
        <authorList>
            <person name="Kawahara Y."/>
            <person name="de la Bastide M."/>
            <person name="Hamilton J.P."/>
            <person name="Kanamori H."/>
            <person name="McCombie W.R."/>
            <person name="Ouyang S."/>
            <person name="Schwartz D.C."/>
            <person name="Tanaka T."/>
            <person name="Wu J."/>
            <person name="Zhou S."/>
            <person name="Childs K.L."/>
            <person name="Davidson R.M."/>
            <person name="Lin H."/>
            <person name="Quesada-Ocampo L."/>
            <person name="Vaillancourt B."/>
            <person name="Sakai H."/>
            <person name="Lee S.S."/>
            <person name="Kim J."/>
            <person name="Numa H."/>
            <person name="Itoh T."/>
            <person name="Buell C.R."/>
            <person name="Matsumoto T."/>
        </authorList>
    </citation>
    <scope>GENOME REANNOTATION</scope>
    <source>
        <strain>cv. Nipponbare</strain>
    </source>
</reference>
<reference key="4">
    <citation type="journal article" date="2005" name="PLoS Biol.">
        <title>The genomes of Oryza sativa: a history of duplications.</title>
        <authorList>
            <person name="Yu J."/>
            <person name="Wang J."/>
            <person name="Lin W."/>
            <person name="Li S."/>
            <person name="Li H."/>
            <person name="Zhou J."/>
            <person name="Ni P."/>
            <person name="Dong W."/>
            <person name="Hu S."/>
            <person name="Zeng C."/>
            <person name="Zhang J."/>
            <person name="Zhang Y."/>
            <person name="Li R."/>
            <person name="Xu Z."/>
            <person name="Li S."/>
            <person name="Li X."/>
            <person name="Zheng H."/>
            <person name="Cong L."/>
            <person name="Lin L."/>
            <person name="Yin J."/>
            <person name="Geng J."/>
            <person name="Li G."/>
            <person name="Shi J."/>
            <person name="Liu J."/>
            <person name="Lv H."/>
            <person name="Li J."/>
            <person name="Wang J."/>
            <person name="Deng Y."/>
            <person name="Ran L."/>
            <person name="Shi X."/>
            <person name="Wang X."/>
            <person name="Wu Q."/>
            <person name="Li C."/>
            <person name="Ren X."/>
            <person name="Wang J."/>
            <person name="Wang X."/>
            <person name="Li D."/>
            <person name="Liu D."/>
            <person name="Zhang X."/>
            <person name="Ji Z."/>
            <person name="Zhao W."/>
            <person name="Sun Y."/>
            <person name="Zhang Z."/>
            <person name="Bao J."/>
            <person name="Han Y."/>
            <person name="Dong L."/>
            <person name="Ji J."/>
            <person name="Chen P."/>
            <person name="Wu S."/>
            <person name="Liu J."/>
            <person name="Xiao Y."/>
            <person name="Bu D."/>
            <person name="Tan J."/>
            <person name="Yang L."/>
            <person name="Ye C."/>
            <person name="Zhang J."/>
            <person name="Xu J."/>
            <person name="Zhou Y."/>
            <person name="Yu Y."/>
            <person name="Zhang B."/>
            <person name="Zhuang S."/>
            <person name="Wei H."/>
            <person name="Liu B."/>
            <person name="Lei M."/>
            <person name="Yu H."/>
            <person name="Li Y."/>
            <person name="Xu H."/>
            <person name="Wei S."/>
            <person name="He X."/>
            <person name="Fang L."/>
            <person name="Zhang Z."/>
            <person name="Zhang Y."/>
            <person name="Huang X."/>
            <person name="Su Z."/>
            <person name="Tong W."/>
            <person name="Li J."/>
            <person name="Tong Z."/>
            <person name="Li S."/>
            <person name="Ye J."/>
            <person name="Wang L."/>
            <person name="Fang L."/>
            <person name="Lei T."/>
            <person name="Chen C.-S."/>
            <person name="Chen H.-C."/>
            <person name="Xu Z."/>
            <person name="Li H."/>
            <person name="Huang H."/>
            <person name="Zhang F."/>
            <person name="Xu H."/>
            <person name="Li N."/>
            <person name="Zhao C."/>
            <person name="Li S."/>
            <person name="Dong L."/>
            <person name="Huang Y."/>
            <person name="Li L."/>
            <person name="Xi Y."/>
            <person name="Qi Q."/>
            <person name="Li W."/>
            <person name="Zhang B."/>
            <person name="Hu W."/>
            <person name="Zhang Y."/>
            <person name="Tian X."/>
            <person name="Jiao Y."/>
            <person name="Liang X."/>
            <person name="Jin J."/>
            <person name="Gao L."/>
            <person name="Zheng W."/>
            <person name="Hao B."/>
            <person name="Liu S.-M."/>
            <person name="Wang W."/>
            <person name="Yuan L."/>
            <person name="Cao M."/>
            <person name="McDermott J."/>
            <person name="Samudrala R."/>
            <person name="Wang J."/>
            <person name="Wong G.K.-S."/>
            <person name="Yang H."/>
        </authorList>
    </citation>
    <scope>NUCLEOTIDE SEQUENCE [LARGE SCALE GENOMIC DNA]</scope>
    <source>
        <strain>cv. Nipponbare</strain>
    </source>
</reference>
<reference key="5">
    <citation type="journal article" date="2003" name="Science">
        <title>Collection, mapping, and annotation of over 28,000 cDNA clones from japonica rice.</title>
        <authorList>
            <consortium name="The rice full-length cDNA consortium"/>
        </authorList>
    </citation>
    <scope>NUCLEOTIDE SEQUENCE [LARGE SCALE MRNA]</scope>
    <source>
        <strain>cv. Nipponbare</strain>
    </source>
</reference>
<reference key="6">
    <citation type="journal article" date="2010" name="J. Exp. Bot.">
        <title>Two solanesyl diphosphate synthases with different subcellular localizations and their respective physiological roles in Oryza sativa.</title>
        <authorList>
            <person name="Ohara K."/>
            <person name="Sasaki K."/>
            <person name="Yazaki K."/>
        </authorList>
    </citation>
    <scope>FUNCTION</scope>
    <scope>CATALYTIC ACTIVITY</scope>
    <scope>TISSUE SPECIFICITY</scope>
    <scope>SUBCELLULAR LOCATION</scope>
</reference>
<organism>
    <name type="scientific">Oryza sativa subsp. japonica</name>
    <name type="common">Rice</name>
    <dbReference type="NCBI Taxonomy" id="39947"/>
    <lineage>
        <taxon>Eukaryota</taxon>
        <taxon>Viridiplantae</taxon>
        <taxon>Streptophyta</taxon>
        <taxon>Embryophyta</taxon>
        <taxon>Tracheophyta</taxon>
        <taxon>Spermatophyta</taxon>
        <taxon>Magnoliopsida</taxon>
        <taxon>Liliopsida</taxon>
        <taxon>Poales</taxon>
        <taxon>Poaceae</taxon>
        <taxon>BOP clade</taxon>
        <taxon>Oryzoideae</taxon>
        <taxon>Oryzeae</taxon>
        <taxon>Oryzinae</taxon>
        <taxon>Oryza</taxon>
        <taxon>Oryza sativa</taxon>
    </lineage>
</organism>
<keyword id="KW-0414">Isoprene biosynthesis</keyword>
<keyword id="KW-0460">Magnesium</keyword>
<keyword id="KW-0479">Metal-binding</keyword>
<keyword id="KW-0496">Mitochondrion</keyword>
<keyword id="KW-1185">Reference proteome</keyword>
<keyword id="KW-0808">Transferase</keyword>
<keyword id="KW-0809">Transit peptide</keyword>
<comment type="function">
    <text evidence="6">Involved in the supply of solanesyl diphosphate for ubiquinone-9 (UQ-9) biosynthesis in mitochondria. Farnesyl diphosphate is the preferred substrate.</text>
</comment>
<comment type="catalytic activity">
    <reaction evidence="6">
        <text>7 isopentenyl diphosphate + (2E)-geranyl diphosphate = all-trans-nonaprenyl diphosphate + 7 diphosphate</text>
        <dbReference type="Rhea" id="RHEA:27563"/>
        <dbReference type="ChEBI" id="CHEBI:33019"/>
        <dbReference type="ChEBI" id="CHEBI:58057"/>
        <dbReference type="ChEBI" id="CHEBI:58391"/>
        <dbReference type="ChEBI" id="CHEBI:128769"/>
        <dbReference type="EC" id="2.5.1.84"/>
    </reaction>
</comment>
<comment type="cofactor">
    <cofactor evidence="1">
        <name>Mg(2+)</name>
        <dbReference type="ChEBI" id="CHEBI:18420"/>
    </cofactor>
    <text evidence="1">Binds 2 Mg(2+) ions per subunit.</text>
</comment>
<comment type="pathway">
    <text>Cofactor biosynthesis; ubiquinone biosynthesis.</text>
</comment>
<comment type="subunit">
    <text evidence="4">Homodimer.</text>
</comment>
<comment type="subcellular location">
    <subcellularLocation>
        <location evidence="6">Mitochondrion</location>
    </subcellularLocation>
</comment>
<comment type="tissue specificity">
    <text evidence="6">Expressed in leaves, stems and roots. Highest expression in roots.</text>
</comment>
<comment type="similarity">
    <text evidence="8">Belongs to the FPP/GGPP synthase family.</text>
</comment>
<comment type="sequence caution" evidence="8">
    <conflict type="erroneous gene model prediction">
        <sequence resource="EMBL-CDS" id="EEE66217"/>
    </conflict>
</comment>
<dbReference type="EC" id="2.5.1.84" evidence="6"/>
<dbReference type="EMBL" id="AP003728">
    <property type="protein sequence ID" value="BAD45534.1"/>
    <property type="molecule type" value="Genomic_DNA"/>
</dbReference>
<dbReference type="EMBL" id="AP004989">
    <property type="protein sequence ID" value="BAD45931.1"/>
    <property type="molecule type" value="Genomic_DNA"/>
</dbReference>
<dbReference type="EMBL" id="AP008212">
    <property type="protein sequence ID" value="BAF20276.1"/>
    <property type="molecule type" value="Genomic_DNA"/>
</dbReference>
<dbReference type="EMBL" id="AP014962">
    <property type="protein sequence ID" value="BAS99121.1"/>
    <property type="molecule type" value="Genomic_DNA"/>
</dbReference>
<dbReference type="EMBL" id="CM000143">
    <property type="protein sequence ID" value="EEE66217.1"/>
    <property type="status" value="ALT_SEQ"/>
    <property type="molecule type" value="Genomic_DNA"/>
</dbReference>
<dbReference type="EMBL" id="AK059456">
    <property type="protein sequence ID" value="BAG87000.1"/>
    <property type="molecule type" value="mRNA"/>
</dbReference>
<dbReference type="RefSeq" id="XP_015644451.1">
    <property type="nucleotide sequence ID" value="XM_015788965.1"/>
</dbReference>
<dbReference type="SMR" id="Q653T6"/>
<dbReference type="FunCoup" id="Q653T6">
    <property type="interactions" value="1695"/>
</dbReference>
<dbReference type="STRING" id="39947.Q653T6"/>
<dbReference type="PaxDb" id="39947-Q653T6"/>
<dbReference type="EnsemblPlants" id="Os06t0678200-01">
    <property type="protein sequence ID" value="Os06t0678200-01"/>
    <property type="gene ID" value="Os06g0678200"/>
</dbReference>
<dbReference type="Gramene" id="Os06t0678200-01">
    <property type="protein sequence ID" value="Os06t0678200-01"/>
    <property type="gene ID" value="Os06g0678200"/>
</dbReference>
<dbReference type="KEGG" id="dosa:Os06g0678200"/>
<dbReference type="eggNOG" id="KOG0776">
    <property type="taxonomic scope" value="Eukaryota"/>
</dbReference>
<dbReference type="HOGENOM" id="CLU_014015_1_2_1"/>
<dbReference type="InParanoid" id="Q653T6"/>
<dbReference type="OMA" id="AFDYYLH"/>
<dbReference type="OrthoDB" id="9927103at2759"/>
<dbReference type="BRENDA" id="2.5.1.84">
    <property type="organism ID" value="4460"/>
</dbReference>
<dbReference type="BRENDA" id="2.5.1.B14">
    <property type="organism ID" value="4460"/>
</dbReference>
<dbReference type="PlantReactome" id="R-OSA-1119367">
    <property type="pathway name" value="Polyisoprenoid biosynthesis"/>
</dbReference>
<dbReference type="PlantReactome" id="R-OSA-1119457">
    <property type="pathway name" value="Geranyldiphosphate biosynthesis"/>
</dbReference>
<dbReference type="PlantReactome" id="R-OSA-1119526">
    <property type="pathway name" value="Trans,trans-farnesyl diphosphate biosynthesis"/>
</dbReference>
<dbReference type="PlantReactome" id="R-OSA-1119545">
    <property type="pathway name" value="Geranylgeranyldiphosphate biosynthesis II (plastidic)"/>
</dbReference>
<dbReference type="UniPathway" id="UPA00232"/>
<dbReference type="Proteomes" id="UP000000763">
    <property type="component" value="Chromosome 6"/>
</dbReference>
<dbReference type="Proteomes" id="UP000007752">
    <property type="component" value="Chromosome 6"/>
</dbReference>
<dbReference type="Proteomes" id="UP000059680">
    <property type="component" value="Chromosome 6"/>
</dbReference>
<dbReference type="GO" id="GO:0005739">
    <property type="term" value="C:mitochondrion"/>
    <property type="evidence" value="ECO:0000314"/>
    <property type="project" value="CACAO"/>
</dbReference>
<dbReference type="GO" id="GO:0032476">
    <property type="term" value="C:polyprenyl diphosphate synthase complex"/>
    <property type="evidence" value="ECO:0000318"/>
    <property type="project" value="GO_Central"/>
</dbReference>
<dbReference type="GO" id="GO:0052923">
    <property type="term" value="F:all-trans-nonaprenyl-diphosphate synthase (geranyl-diphosphate specific) activity"/>
    <property type="evidence" value="ECO:0007669"/>
    <property type="project" value="UniProtKB-EC"/>
</dbReference>
<dbReference type="GO" id="GO:0004311">
    <property type="term" value="F:geranylgeranyl diphosphate synthase activity"/>
    <property type="evidence" value="ECO:0000314"/>
    <property type="project" value="UniProtKB"/>
</dbReference>
<dbReference type="GO" id="GO:0046872">
    <property type="term" value="F:metal ion binding"/>
    <property type="evidence" value="ECO:0007669"/>
    <property type="project" value="UniProtKB-KW"/>
</dbReference>
<dbReference type="GO" id="GO:0004659">
    <property type="term" value="F:prenyltransferase activity"/>
    <property type="evidence" value="ECO:0000318"/>
    <property type="project" value="GO_Central"/>
</dbReference>
<dbReference type="GO" id="GO:0008299">
    <property type="term" value="P:isoprenoid biosynthetic process"/>
    <property type="evidence" value="ECO:0000318"/>
    <property type="project" value="GO_Central"/>
</dbReference>
<dbReference type="GO" id="GO:0010236">
    <property type="term" value="P:plastoquinone biosynthetic process"/>
    <property type="evidence" value="ECO:0000314"/>
    <property type="project" value="UniProtKB"/>
</dbReference>
<dbReference type="GO" id="GO:0006744">
    <property type="term" value="P:ubiquinone biosynthetic process"/>
    <property type="evidence" value="ECO:0000318"/>
    <property type="project" value="GO_Central"/>
</dbReference>
<dbReference type="CDD" id="cd00685">
    <property type="entry name" value="Trans_IPPS_HT"/>
    <property type="match status" value="1"/>
</dbReference>
<dbReference type="FunFam" id="1.10.600.10:FF:000015">
    <property type="entry name" value="Solanesyl diphosphate synthase 3, chloroplastic/mitochondrial"/>
    <property type="match status" value="1"/>
</dbReference>
<dbReference type="Gene3D" id="1.10.600.10">
    <property type="entry name" value="Farnesyl Diphosphate Synthase"/>
    <property type="match status" value="1"/>
</dbReference>
<dbReference type="InterPro" id="IPR008949">
    <property type="entry name" value="Isoprenoid_synthase_dom_sf"/>
</dbReference>
<dbReference type="InterPro" id="IPR000092">
    <property type="entry name" value="Polyprenyl_synt"/>
</dbReference>
<dbReference type="InterPro" id="IPR033749">
    <property type="entry name" value="Polyprenyl_synt_CS"/>
</dbReference>
<dbReference type="PANTHER" id="PTHR12001:SF69">
    <property type="entry name" value="ALL TRANS-POLYPRENYL-DIPHOSPHATE SYNTHASE PDSS1"/>
    <property type="match status" value="1"/>
</dbReference>
<dbReference type="PANTHER" id="PTHR12001">
    <property type="entry name" value="GERANYLGERANYL PYROPHOSPHATE SYNTHASE"/>
    <property type="match status" value="1"/>
</dbReference>
<dbReference type="Pfam" id="PF00348">
    <property type="entry name" value="polyprenyl_synt"/>
    <property type="match status" value="1"/>
</dbReference>
<dbReference type="SFLD" id="SFLDS00005">
    <property type="entry name" value="Isoprenoid_Synthase_Type_I"/>
    <property type="match status" value="1"/>
</dbReference>
<dbReference type="SUPFAM" id="SSF48576">
    <property type="entry name" value="Terpenoid synthases"/>
    <property type="match status" value="1"/>
</dbReference>
<dbReference type="PROSITE" id="PS00723">
    <property type="entry name" value="POLYPRENYL_SYNTHASE_1"/>
    <property type="match status" value="1"/>
</dbReference>
<dbReference type="PROSITE" id="PS00444">
    <property type="entry name" value="POLYPRENYL_SYNTHASE_2"/>
    <property type="match status" value="1"/>
</dbReference>
<protein>
    <recommendedName>
        <fullName evidence="7">Solanesyl-diphosphate synthase 1, mitochondrial</fullName>
        <shortName evidence="7">OsSPS1</shortName>
        <ecNumber evidence="6">2.5.1.84</ecNumber>
    </recommendedName>
    <alternativeName>
        <fullName evidence="8">All-trans-nonaprenyl-diphosphate synthase 1 (geranyl-diphosphate specific)</fullName>
    </alternativeName>
</protein>
<proteinExistence type="evidence at protein level"/>
<feature type="transit peptide" description="Mitochondrion" evidence="5">
    <location>
        <begin position="1"/>
        <end position="31"/>
    </location>
</feature>
<feature type="chain" id="PRO_0000414851" description="Solanesyl-diphosphate synthase 1, mitochondrial">
    <location>
        <begin position="32"/>
        <end position="430"/>
    </location>
</feature>
<feature type="binding site" evidence="2">
    <location>
        <position position="133"/>
    </location>
    <ligand>
        <name>isopentenyl diphosphate</name>
        <dbReference type="ChEBI" id="CHEBI:128769"/>
    </ligand>
</feature>
<feature type="binding site" evidence="2">
    <location>
        <position position="136"/>
    </location>
    <ligand>
        <name>isopentenyl diphosphate</name>
        <dbReference type="ChEBI" id="CHEBI:128769"/>
    </ligand>
</feature>
<feature type="binding site" evidence="3">
    <location>
        <position position="182"/>
    </location>
    <ligand>
        <name>isopentenyl diphosphate</name>
        <dbReference type="ChEBI" id="CHEBI:128769"/>
    </ligand>
</feature>
<feature type="binding site" evidence="2">
    <location>
        <position position="189"/>
    </location>
    <ligand>
        <name>Mg(2+)</name>
        <dbReference type="ChEBI" id="CHEBI:18420"/>
        <label>1</label>
    </ligand>
</feature>
<feature type="binding site" evidence="2">
    <location>
        <position position="189"/>
    </location>
    <ligand>
        <name>Mg(2+)</name>
        <dbReference type="ChEBI" id="CHEBI:18420"/>
        <label>2</label>
    </ligand>
</feature>
<feature type="binding site" evidence="2">
    <location>
        <position position="193"/>
    </location>
    <ligand>
        <name>Mg(2+)</name>
        <dbReference type="ChEBI" id="CHEBI:18420"/>
        <label>1</label>
    </ligand>
</feature>
<feature type="binding site" evidence="2">
    <location>
        <position position="193"/>
    </location>
    <ligand>
        <name>Mg(2+)</name>
        <dbReference type="ChEBI" id="CHEBI:18420"/>
        <label>2</label>
    </ligand>
</feature>
<feature type="binding site" evidence="1">
    <location>
        <position position="198"/>
    </location>
    <ligand>
        <name>an all-trans-polyprenyl diphosphate</name>
        <dbReference type="ChEBI" id="CHEBI:58914"/>
    </ligand>
</feature>
<feature type="binding site" evidence="2">
    <location>
        <position position="199"/>
    </location>
    <ligand>
        <name>isopentenyl diphosphate</name>
        <dbReference type="ChEBI" id="CHEBI:128769"/>
    </ligand>
</feature>
<feature type="binding site" evidence="1">
    <location>
        <position position="275"/>
    </location>
    <ligand>
        <name>an all-trans-polyprenyl diphosphate</name>
        <dbReference type="ChEBI" id="CHEBI:58914"/>
    </ligand>
</feature>
<feature type="binding site" evidence="1">
    <location>
        <position position="276"/>
    </location>
    <ligand>
        <name>an all-trans-polyprenyl diphosphate</name>
        <dbReference type="ChEBI" id="CHEBI:58914"/>
    </ligand>
</feature>
<feature type="binding site" evidence="1">
    <location>
        <position position="313"/>
    </location>
    <ligand>
        <name>an all-trans-polyprenyl diphosphate</name>
        <dbReference type="ChEBI" id="CHEBI:58914"/>
    </ligand>
</feature>
<feature type="binding site" evidence="1">
    <location>
        <position position="330"/>
    </location>
    <ligand>
        <name>an all-trans-polyprenyl diphosphate</name>
        <dbReference type="ChEBI" id="CHEBI:58914"/>
    </ligand>
</feature>
<accession>Q653T6</accession>
<accession>A0A0N7KML1</accession>
<accession>B9FQH5</accession>
<sequence length="430" mass="47064">MSWRWALARRVAALGATSGGGDGATAQAQRLFSSAAALLGRHPPPPSPPHYQIRSKVVGCRGATFVSSRWLHDAQYQVRQDGLSRSEEQQDPFELVADELSLLANRLRSMVAAEVPKLASAAEYFFKVGAEGKRFRPTVLLLMASALKFPLSDSTEVGVLTILANKLRTRQQNIAEITEMIHVASLLHDDVLDDADTRRGVSSLNCIMGNKLSVLAGDFLLSRACVALAALGNTEVVSLMATAVEHLVTGETMQISTSREQRRSMDYYLQKTYYKTASLISNSCKAVAILAGHTADVSMLAYEYGRNLGLAFQLIDDVLDFTGTSASLGKGSLTDIRHGIITAPMLYAMEEFPQLHEVVDRGFDNPANVELALDYLQKSRGIEKTKELAREHANRAIKAIEALPDSDDEDVLTSRRALIDITERVITRTK</sequence>
<name>SPS1_ORYSJ</name>